<name>SPXN2_PONPY</name>
<protein>
    <recommendedName>
        <fullName>Sperm protein associated with the nucleus on the X chromosome N2</fullName>
    </recommendedName>
    <alternativeName>
        <fullName>Nuclear-associated protein SPAN-Xn2</fullName>
        <shortName>SPANX-N2</shortName>
    </alternativeName>
    <alternativeName>
        <fullName>SPANX family member N2</fullName>
    </alternativeName>
</protein>
<proteinExistence type="inferred from homology"/>
<gene>
    <name type="primary">SPANXN2</name>
</gene>
<sequence length="160" mass="17918">MEKPTSSTNGEKRKSPCDSNNRNDEMQETPNRDLALEPSLKKMKTSEYSTVLVLCYRKTKKIHSNQLENDQSQENSVNPVQEEEDEGSSQEDEDLDSSAESSKQDEDLQLPEGSFQEDKDLGLSEGSSQEDEDLDSSERSSQEEKDPDASEGSSEEGEED</sequence>
<comment type="similarity">
    <text evidence="2">Belongs to the SPAN-X family.</text>
</comment>
<evidence type="ECO:0000256" key="1">
    <source>
        <dbReference type="SAM" id="MobiDB-lite"/>
    </source>
</evidence>
<evidence type="ECO:0000305" key="2"/>
<feature type="chain" id="PRO_0000285693" description="Sperm protein associated with the nucleus on the X chromosome N2">
    <location>
        <begin position="1"/>
        <end position="160"/>
    </location>
</feature>
<feature type="region of interest" description="Disordered" evidence="1">
    <location>
        <begin position="1"/>
        <end position="48"/>
    </location>
</feature>
<feature type="region of interest" description="Disordered" evidence="1">
    <location>
        <begin position="64"/>
        <end position="160"/>
    </location>
</feature>
<feature type="compositionally biased region" description="Basic and acidic residues" evidence="1">
    <location>
        <begin position="10"/>
        <end position="35"/>
    </location>
</feature>
<feature type="compositionally biased region" description="Polar residues" evidence="1">
    <location>
        <begin position="64"/>
        <end position="79"/>
    </location>
</feature>
<feature type="compositionally biased region" description="Acidic residues" evidence="1">
    <location>
        <begin position="81"/>
        <end position="97"/>
    </location>
</feature>
<feature type="compositionally biased region" description="Basic and acidic residues" evidence="1">
    <location>
        <begin position="136"/>
        <end position="148"/>
    </location>
</feature>
<accession>Q6SJ82</accession>
<dbReference type="EMBL" id="AY457942">
    <property type="protein sequence ID" value="AAS19325.1"/>
    <property type="molecule type" value="Genomic_DNA"/>
</dbReference>
<dbReference type="InterPro" id="IPR010007">
    <property type="entry name" value="SPAN-X_fam"/>
</dbReference>
<dbReference type="Pfam" id="PF07458">
    <property type="entry name" value="SPAN-X"/>
    <property type="match status" value="1"/>
</dbReference>
<organism>
    <name type="scientific">Pongo pygmaeus</name>
    <name type="common">Bornean orangutan</name>
    <dbReference type="NCBI Taxonomy" id="9600"/>
    <lineage>
        <taxon>Eukaryota</taxon>
        <taxon>Metazoa</taxon>
        <taxon>Chordata</taxon>
        <taxon>Craniata</taxon>
        <taxon>Vertebrata</taxon>
        <taxon>Euteleostomi</taxon>
        <taxon>Mammalia</taxon>
        <taxon>Eutheria</taxon>
        <taxon>Euarchontoglires</taxon>
        <taxon>Primates</taxon>
        <taxon>Haplorrhini</taxon>
        <taxon>Catarrhini</taxon>
        <taxon>Hominidae</taxon>
        <taxon>Pongo</taxon>
    </lineage>
</organism>
<reference key="1">
    <citation type="journal article" date="2004" name="Proc. Natl. Acad. Sci. U.S.A.">
        <title>The SPANX gene family of cancer/testis-specific antigens: rapid evolution and amplification in African great apes and hominids.</title>
        <authorList>
            <person name="Kouprina N."/>
            <person name="Mullokandov M."/>
            <person name="Rogozin I.B."/>
            <person name="Collins N.K."/>
            <person name="Solomon G."/>
            <person name="Otstot J."/>
            <person name="Risinger J.I."/>
            <person name="Koonin E.V."/>
            <person name="Barrett J.C."/>
            <person name="Larionov V."/>
        </authorList>
    </citation>
    <scope>NUCLEOTIDE SEQUENCE [GENOMIC DNA]</scope>
</reference>